<proteinExistence type="inferred from homology"/>
<dbReference type="EC" id="3.1.26.5" evidence="1"/>
<dbReference type="EMBL" id="AP009324">
    <property type="protein sequence ID" value="BAF79580.1"/>
    <property type="molecule type" value="Genomic_DNA"/>
</dbReference>
<dbReference type="SMR" id="A7X7A9"/>
<dbReference type="KEGG" id="saw:SAHV_2697"/>
<dbReference type="HOGENOM" id="CLU_117179_9_1_9"/>
<dbReference type="GO" id="GO:0030677">
    <property type="term" value="C:ribonuclease P complex"/>
    <property type="evidence" value="ECO:0007669"/>
    <property type="project" value="TreeGrafter"/>
</dbReference>
<dbReference type="GO" id="GO:0042781">
    <property type="term" value="F:3'-tRNA processing endoribonuclease activity"/>
    <property type="evidence" value="ECO:0007669"/>
    <property type="project" value="TreeGrafter"/>
</dbReference>
<dbReference type="GO" id="GO:0004526">
    <property type="term" value="F:ribonuclease P activity"/>
    <property type="evidence" value="ECO:0007669"/>
    <property type="project" value="UniProtKB-UniRule"/>
</dbReference>
<dbReference type="GO" id="GO:0000049">
    <property type="term" value="F:tRNA binding"/>
    <property type="evidence" value="ECO:0007669"/>
    <property type="project" value="UniProtKB-UniRule"/>
</dbReference>
<dbReference type="GO" id="GO:0001682">
    <property type="term" value="P:tRNA 5'-leader removal"/>
    <property type="evidence" value="ECO:0007669"/>
    <property type="project" value="UniProtKB-UniRule"/>
</dbReference>
<dbReference type="FunFam" id="3.30.230.10:FF:000021">
    <property type="entry name" value="Ribonuclease P protein component"/>
    <property type="match status" value="1"/>
</dbReference>
<dbReference type="Gene3D" id="3.30.230.10">
    <property type="match status" value="1"/>
</dbReference>
<dbReference type="HAMAP" id="MF_00227">
    <property type="entry name" value="RNase_P"/>
    <property type="match status" value="1"/>
</dbReference>
<dbReference type="InterPro" id="IPR020568">
    <property type="entry name" value="Ribosomal_Su5_D2-typ_SF"/>
</dbReference>
<dbReference type="InterPro" id="IPR014721">
    <property type="entry name" value="Ribsml_uS5_D2-typ_fold_subgr"/>
</dbReference>
<dbReference type="InterPro" id="IPR000100">
    <property type="entry name" value="RNase_P"/>
</dbReference>
<dbReference type="InterPro" id="IPR020539">
    <property type="entry name" value="RNase_P_CS"/>
</dbReference>
<dbReference type="NCBIfam" id="TIGR00188">
    <property type="entry name" value="rnpA"/>
    <property type="match status" value="1"/>
</dbReference>
<dbReference type="PANTHER" id="PTHR33992">
    <property type="entry name" value="RIBONUCLEASE P PROTEIN COMPONENT"/>
    <property type="match status" value="1"/>
</dbReference>
<dbReference type="PANTHER" id="PTHR33992:SF1">
    <property type="entry name" value="RIBONUCLEASE P PROTEIN COMPONENT"/>
    <property type="match status" value="1"/>
</dbReference>
<dbReference type="Pfam" id="PF00825">
    <property type="entry name" value="Ribonuclease_P"/>
    <property type="match status" value="1"/>
</dbReference>
<dbReference type="SUPFAM" id="SSF54211">
    <property type="entry name" value="Ribosomal protein S5 domain 2-like"/>
    <property type="match status" value="1"/>
</dbReference>
<dbReference type="PROSITE" id="PS00648">
    <property type="entry name" value="RIBONUCLEASE_P"/>
    <property type="match status" value="1"/>
</dbReference>
<name>RNPA_STAA1</name>
<organism>
    <name type="scientific">Staphylococcus aureus (strain Mu3 / ATCC 700698)</name>
    <dbReference type="NCBI Taxonomy" id="418127"/>
    <lineage>
        <taxon>Bacteria</taxon>
        <taxon>Bacillati</taxon>
        <taxon>Bacillota</taxon>
        <taxon>Bacilli</taxon>
        <taxon>Bacillales</taxon>
        <taxon>Staphylococcaceae</taxon>
        <taxon>Staphylococcus</taxon>
    </lineage>
</organism>
<comment type="function">
    <text evidence="1">RNaseP catalyzes the removal of the 5'-leader sequence from pre-tRNA to produce the mature 5'-terminus. It can also cleave other RNA substrates such as 4.5S RNA. The protein component plays an auxiliary but essential role in vivo by binding to the 5'-leader sequence and broadening the substrate specificity of the ribozyme.</text>
</comment>
<comment type="catalytic activity">
    <reaction evidence="1">
        <text>Endonucleolytic cleavage of RNA, removing 5'-extranucleotides from tRNA precursor.</text>
        <dbReference type="EC" id="3.1.26.5"/>
    </reaction>
</comment>
<comment type="subunit">
    <text evidence="1">Consists of a catalytic RNA component (M1 or rnpB) and a protein subunit.</text>
</comment>
<comment type="similarity">
    <text evidence="1">Belongs to the RnpA family.</text>
</comment>
<accession>A7X7A9</accession>
<protein>
    <recommendedName>
        <fullName evidence="1">Ribonuclease P protein component</fullName>
        <shortName evidence="1">RNase P protein</shortName>
        <shortName evidence="1">RNaseP protein</shortName>
        <ecNumber evidence="1">3.1.26.5</ecNumber>
    </recommendedName>
    <alternativeName>
        <fullName evidence="1">Protein C5</fullName>
    </alternativeName>
</protein>
<keyword id="KW-0255">Endonuclease</keyword>
<keyword id="KW-0378">Hydrolase</keyword>
<keyword id="KW-0540">Nuclease</keyword>
<keyword id="KW-0694">RNA-binding</keyword>
<keyword id="KW-0819">tRNA processing</keyword>
<feature type="chain" id="PRO_1000021469" description="Ribonuclease P protein component">
    <location>
        <begin position="1"/>
        <end position="115"/>
    </location>
</feature>
<sequence length="115" mass="13426">MEKAYRIKKNADFQRIYKKGHSVANRQFVVYTCNNKEIDHFRLGISVSKKLGNAVLRNKIKRAIRENFKVHKSHILAKDIIVIARQPAKDMTTLQIQNSLEHVLKIAKVFNKKIK</sequence>
<evidence type="ECO:0000255" key="1">
    <source>
        <dbReference type="HAMAP-Rule" id="MF_00227"/>
    </source>
</evidence>
<gene>
    <name evidence="1" type="primary">rnpA</name>
    <name type="ordered locus">SAHV_2697</name>
</gene>
<reference key="1">
    <citation type="journal article" date="2008" name="Antimicrob. Agents Chemother.">
        <title>Mutated response regulator graR is responsible for phenotypic conversion of Staphylococcus aureus from heterogeneous vancomycin-intermediate resistance to vancomycin-intermediate resistance.</title>
        <authorList>
            <person name="Neoh H.-M."/>
            <person name="Cui L."/>
            <person name="Yuzawa H."/>
            <person name="Takeuchi F."/>
            <person name="Matsuo M."/>
            <person name="Hiramatsu K."/>
        </authorList>
    </citation>
    <scope>NUCLEOTIDE SEQUENCE [LARGE SCALE GENOMIC DNA]</scope>
    <source>
        <strain>Mu3 / ATCC 700698</strain>
    </source>
</reference>